<organism>
    <name type="scientific">Schizosaccharomyces pombe (strain 972 / ATCC 24843)</name>
    <name type="common">Fission yeast</name>
    <dbReference type="NCBI Taxonomy" id="284812"/>
    <lineage>
        <taxon>Eukaryota</taxon>
        <taxon>Fungi</taxon>
        <taxon>Dikarya</taxon>
        <taxon>Ascomycota</taxon>
        <taxon>Taphrinomycotina</taxon>
        <taxon>Schizosaccharomycetes</taxon>
        <taxon>Schizosaccharomycetales</taxon>
        <taxon>Schizosaccharomycetaceae</taxon>
        <taxon>Schizosaccharomyces</taxon>
    </lineage>
</organism>
<feature type="chain" id="PRO_0000121549" description="Uncharacterized protein C23C4.09c">
    <location>
        <begin position="1"/>
        <end position="131"/>
    </location>
</feature>
<feature type="region of interest" description="Disordered" evidence="1">
    <location>
        <begin position="15"/>
        <end position="43"/>
    </location>
</feature>
<feature type="compositionally biased region" description="Polar residues" evidence="1">
    <location>
        <begin position="23"/>
        <end position="34"/>
    </location>
</feature>
<protein>
    <recommendedName>
        <fullName>Uncharacterized protein C23C4.09c</fullName>
    </recommendedName>
</protein>
<sequence length="131" mass="15042">MDEELQAIRQARLAQLQAEHGSAPSNIASGPSSNQQQQEVQDEMRQNLLSQILEHPARDRLRRIALVRKDRAEAVEELLLRMAKTGQISHKISEPELIELLEKISGEVSKRNETKIVINRRVQDDEDDWDL</sequence>
<keyword id="KW-1185">Reference proteome</keyword>
<proteinExistence type="inferred from homology"/>
<comment type="similarity">
    <text evidence="2">Belongs to the PDCD5 family.</text>
</comment>
<dbReference type="EMBL" id="CU329670">
    <property type="protein sequence ID" value="CAB16880.1"/>
    <property type="molecule type" value="Genomic_DNA"/>
</dbReference>
<dbReference type="PIR" id="T38264">
    <property type="entry name" value="T38264"/>
</dbReference>
<dbReference type="RefSeq" id="NP_593181.1">
    <property type="nucleotide sequence ID" value="NM_001018577.2"/>
</dbReference>
<dbReference type="SMR" id="O13929"/>
<dbReference type="BioGRID" id="278411">
    <property type="interactions" value="23"/>
</dbReference>
<dbReference type="FunCoup" id="O13929">
    <property type="interactions" value="507"/>
</dbReference>
<dbReference type="STRING" id="284812.O13929"/>
<dbReference type="iPTMnet" id="O13929"/>
<dbReference type="PaxDb" id="4896-SPAC23C4.09c.1"/>
<dbReference type="EnsemblFungi" id="SPAC23C4.09c.1">
    <property type="protein sequence ID" value="SPAC23C4.09c.1:pep"/>
    <property type="gene ID" value="SPAC23C4.09c"/>
</dbReference>
<dbReference type="KEGG" id="spo:2541923"/>
<dbReference type="PomBase" id="SPAC23C4.09c"/>
<dbReference type="VEuPathDB" id="FungiDB:SPAC23C4.09c"/>
<dbReference type="eggNOG" id="KOG3431">
    <property type="taxonomic scope" value="Eukaryota"/>
</dbReference>
<dbReference type="HOGENOM" id="CLU_122978_0_0_1"/>
<dbReference type="InParanoid" id="O13929"/>
<dbReference type="OMA" id="MQYEMQK"/>
<dbReference type="PhylomeDB" id="O13929"/>
<dbReference type="PRO" id="PR:O13929"/>
<dbReference type="Proteomes" id="UP000002485">
    <property type="component" value="Chromosome I"/>
</dbReference>
<dbReference type="GO" id="GO:0005829">
    <property type="term" value="C:cytosol"/>
    <property type="evidence" value="ECO:0000318"/>
    <property type="project" value="GO_Central"/>
</dbReference>
<dbReference type="GO" id="GO:0005634">
    <property type="term" value="C:nucleus"/>
    <property type="evidence" value="ECO:0000318"/>
    <property type="project" value="GO_Central"/>
</dbReference>
<dbReference type="GO" id="GO:0003677">
    <property type="term" value="F:DNA binding"/>
    <property type="evidence" value="ECO:0007669"/>
    <property type="project" value="InterPro"/>
</dbReference>
<dbReference type="GO" id="GO:0061077">
    <property type="term" value="P:chaperone-mediated protein folding"/>
    <property type="evidence" value="ECO:0000266"/>
    <property type="project" value="PomBase"/>
</dbReference>
<dbReference type="Gene3D" id="1.10.8.140">
    <property type="entry name" value="PDCD5-like"/>
    <property type="match status" value="1"/>
</dbReference>
<dbReference type="InterPro" id="IPR002836">
    <property type="entry name" value="PDCD5-like"/>
</dbReference>
<dbReference type="InterPro" id="IPR036883">
    <property type="entry name" value="PDCD5-like_sf"/>
</dbReference>
<dbReference type="PANTHER" id="PTHR10840">
    <property type="entry name" value="PROGRAMMED CELL DEATH PROTEIN 5"/>
    <property type="match status" value="1"/>
</dbReference>
<dbReference type="PANTHER" id="PTHR10840:SF0">
    <property type="entry name" value="PROGRAMMED CELL DEATH PROTEIN 5"/>
    <property type="match status" value="1"/>
</dbReference>
<dbReference type="Pfam" id="PF01984">
    <property type="entry name" value="dsDNA_bind"/>
    <property type="match status" value="1"/>
</dbReference>
<dbReference type="PIRSF" id="PIRSF015730">
    <property type="entry name" value="TFAR19"/>
    <property type="match status" value="1"/>
</dbReference>
<dbReference type="SUPFAM" id="SSF46950">
    <property type="entry name" value="Double-stranded DNA-binding domain"/>
    <property type="match status" value="1"/>
</dbReference>
<gene>
    <name type="ORF">SPAC23C4.09c</name>
</gene>
<reference key="1">
    <citation type="journal article" date="2002" name="Nature">
        <title>The genome sequence of Schizosaccharomyces pombe.</title>
        <authorList>
            <person name="Wood V."/>
            <person name="Gwilliam R."/>
            <person name="Rajandream M.A."/>
            <person name="Lyne M.H."/>
            <person name="Lyne R."/>
            <person name="Stewart A."/>
            <person name="Sgouros J.G."/>
            <person name="Peat N."/>
            <person name="Hayles J."/>
            <person name="Baker S.G."/>
            <person name="Basham D."/>
            <person name="Bowman S."/>
            <person name="Brooks K."/>
            <person name="Brown D."/>
            <person name="Brown S."/>
            <person name="Chillingworth T."/>
            <person name="Churcher C.M."/>
            <person name="Collins M."/>
            <person name="Connor R."/>
            <person name="Cronin A."/>
            <person name="Davis P."/>
            <person name="Feltwell T."/>
            <person name="Fraser A."/>
            <person name="Gentles S."/>
            <person name="Goble A."/>
            <person name="Hamlin N."/>
            <person name="Harris D.E."/>
            <person name="Hidalgo J."/>
            <person name="Hodgson G."/>
            <person name="Holroyd S."/>
            <person name="Hornsby T."/>
            <person name="Howarth S."/>
            <person name="Huckle E.J."/>
            <person name="Hunt S."/>
            <person name="Jagels K."/>
            <person name="James K.D."/>
            <person name="Jones L."/>
            <person name="Jones M."/>
            <person name="Leather S."/>
            <person name="McDonald S."/>
            <person name="McLean J."/>
            <person name="Mooney P."/>
            <person name="Moule S."/>
            <person name="Mungall K.L."/>
            <person name="Murphy L.D."/>
            <person name="Niblett D."/>
            <person name="Odell C."/>
            <person name="Oliver K."/>
            <person name="O'Neil S."/>
            <person name="Pearson D."/>
            <person name="Quail M.A."/>
            <person name="Rabbinowitsch E."/>
            <person name="Rutherford K.M."/>
            <person name="Rutter S."/>
            <person name="Saunders D."/>
            <person name="Seeger K."/>
            <person name="Sharp S."/>
            <person name="Skelton J."/>
            <person name="Simmonds M.N."/>
            <person name="Squares R."/>
            <person name="Squares S."/>
            <person name="Stevens K."/>
            <person name="Taylor K."/>
            <person name="Taylor R.G."/>
            <person name="Tivey A."/>
            <person name="Walsh S.V."/>
            <person name="Warren T."/>
            <person name="Whitehead S."/>
            <person name="Woodward J.R."/>
            <person name="Volckaert G."/>
            <person name="Aert R."/>
            <person name="Robben J."/>
            <person name="Grymonprez B."/>
            <person name="Weltjens I."/>
            <person name="Vanstreels E."/>
            <person name="Rieger M."/>
            <person name="Schaefer M."/>
            <person name="Mueller-Auer S."/>
            <person name="Gabel C."/>
            <person name="Fuchs M."/>
            <person name="Duesterhoeft A."/>
            <person name="Fritzc C."/>
            <person name="Holzer E."/>
            <person name="Moestl D."/>
            <person name="Hilbert H."/>
            <person name="Borzym K."/>
            <person name="Langer I."/>
            <person name="Beck A."/>
            <person name="Lehrach H."/>
            <person name="Reinhardt R."/>
            <person name="Pohl T.M."/>
            <person name="Eger P."/>
            <person name="Zimmermann W."/>
            <person name="Wedler H."/>
            <person name="Wambutt R."/>
            <person name="Purnelle B."/>
            <person name="Goffeau A."/>
            <person name="Cadieu E."/>
            <person name="Dreano S."/>
            <person name="Gloux S."/>
            <person name="Lelaure V."/>
            <person name="Mottier S."/>
            <person name="Galibert F."/>
            <person name="Aves S.J."/>
            <person name="Xiang Z."/>
            <person name="Hunt C."/>
            <person name="Moore K."/>
            <person name="Hurst S.M."/>
            <person name="Lucas M."/>
            <person name="Rochet M."/>
            <person name="Gaillardin C."/>
            <person name="Tallada V.A."/>
            <person name="Garzon A."/>
            <person name="Thode G."/>
            <person name="Daga R.R."/>
            <person name="Cruzado L."/>
            <person name="Jimenez J."/>
            <person name="Sanchez M."/>
            <person name="del Rey F."/>
            <person name="Benito J."/>
            <person name="Dominguez A."/>
            <person name="Revuelta J.L."/>
            <person name="Moreno S."/>
            <person name="Armstrong J."/>
            <person name="Forsburg S.L."/>
            <person name="Cerutti L."/>
            <person name="Lowe T."/>
            <person name="McCombie W.R."/>
            <person name="Paulsen I."/>
            <person name="Potashkin J."/>
            <person name="Shpakovski G.V."/>
            <person name="Ussery D."/>
            <person name="Barrell B.G."/>
            <person name="Nurse P."/>
        </authorList>
    </citation>
    <scope>NUCLEOTIDE SEQUENCE [LARGE SCALE GENOMIC DNA]</scope>
    <source>
        <strain>972 / ATCC 24843</strain>
    </source>
</reference>
<accession>O13929</accession>
<evidence type="ECO:0000256" key="1">
    <source>
        <dbReference type="SAM" id="MobiDB-lite"/>
    </source>
</evidence>
<evidence type="ECO:0000305" key="2"/>
<name>YF69_SCHPO</name>